<comment type="function">
    <text evidence="1">Catalyzes the transfer of a N-acetyl-glucosamine moiety to 1D-myo-inositol 3-phosphate to produce 1D-myo-inositol 2-acetamido-2-deoxy-glucopyranoside 3-phosphate in the mycothiol biosynthesis pathway.</text>
</comment>
<comment type="catalytic activity">
    <reaction evidence="1">
        <text>1D-myo-inositol 3-phosphate + UDP-N-acetyl-alpha-D-glucosamine = 1D-myo-inositol 2-acetamido-2-deoxy-alpha-D-glucopyranoside 3-phosphate + UDP + H(+)</text>
        <dbReference type="Rhea" id="RHEA:26188"/>
        <dbReference type="ChEBI" id="CHEBI:15378"/>
        <dbReference type="ChEBI" id="CHEBI:57705"/>
        <dbReference type="ChEBI" id="CHEBI:58223"/>
        <dbReference type="ChEBI" id="CHEBI:58401"/>
        <dbReference type="ChEBI" id="CHEBI:58892"/>
        <dbReference type="EC" id="2.4.1.250"/>
    </reaction>
</comment>
<comment type="subunit">
    <text evidence="1">Homodimer.</text>
</comment>
<comment type="similarity">
    <text evidence="1">Belongs to the glycosyltransferase group 1 family. MshA subfamily.</text>
</comment>
<feature type="chain" id="PRO_0000400159" description="D-inositol 3-phosphate glycosyltransferase">
    <location>
        <begin position="1"/>
        <end position="443"/>
    </location>
</feature>
<feature type="binding site" evidence="1">
    <location>
        <position position="30"/>
    </location>
    <ligand>
        <name>1D-myo-inositol 3-phosphate</name>
        <dbReference type="ChEBI" id="CHEBI:58401"/>
    </ligand>
</feature>
<feature type="binding site" evidence="1">
    <location>
        <begin position="36"/>
        <end position="37"/>
    </location>
    <ligand>
        <name>UDP-N-acetyl-alpha-D-glucosamine</name>
        <dbReference type="ChEBI" id="CHEBI:57705"/>
    </ligand>
</feature>
<feature type="binding site" evidence="1">
    <location>
        <begin position="41"/>
        <end position="46"/>
    </location>
    <ligand>
        <name>1D-myo-inositol 3-phosphate</name>
        <dbReference type="ChEBI" id="CHEBI:58401"/>
    </ligand>
</feature>
<feature type="binding site" evidence="1">
    <location>
        <position position="44"/>
    </location>
    <ligand>
        <name>UDP-N-acetyl-alpha-D-glucosamine</name>
        <dbReference type="ChEBI" id="CHEBI:57705"/>
    </ligand>
</feature>
<feature type="binding site" evidence="1">
    <location>
        <position position="99"/>
    </location>
    <ligand>
        <name>1D-myo-inositol 3-phosphate</name>
        <dbReference type="ChEBI" id="CHEBI:58401"/>
    </ligand>
</feature>
<feature type="binding site" evidence="1">
    <location>
        <position position="132"/>
    </location>
    <ligand>
        <name>1D-myo-inositol 3-phosphate</name>
        <dbReference type="ChEBI" id="CHEBI:58401"/>
    </ligand>
</feature>
<feature type="binding site" evidence="1">
    <location>
        <position position="156"/>
    </location>
    <ligand>
        <name>1D-myo-inositol 3-phosphate</name>
        <dbReference type="ChEBI" id="CHEBI:58401"/>
    </ligand>
</feature>
<feature type="binding site" evidence="1">
    <location>
        <position position="176"/>
    </location>
    <ligand>
        <name>1D-myo-inositol 3-phosphate</name>
        <dbReference type="ChEBI" id="CHEBI:58401"/>
    </ligand>
</feature>
<feature type="binding site" evidence="1">
    <location>
        <position position="250"/>
    </location>
    <ligand>
        <name>UDP-N-acetyl-alpha-D-glucosamine</name>
        <dbReference type="ChEBI" id="CHEBI:57705"/>
    </ligand>
</feature>
<feature type="binding site" evidence="1">
    <location>
        <position position="255"/>
    </location>
    <ligand>
        <name>UDP-N-acetyl-alpha-D-glucosamine</name>
        <dbReference type="ChEBI" id="CHEBI:57705"/>
    </ligand>
</feature>
<feature type="binding site" evidence="1">
    <location>
        <position position="316"/>
    </location>
    <ligand>
        <name>UDP-N-acetyl-alpha-D-glucosamine</name>
        <dbReference type="ChEBI" id="CHEBI:57705"/>
    </ligand>
</feature>
<feature type="binding site" evidence="1">
    <location>
        <position position="325"/>
    </location>
    <ligand>
        <name>Mg(2+)</name>
        <dbReference type="ChEBI" id="CHEBI:18420"/>
    </ligand>
</feature>
<feature type="binding site" evidence="1">
    <location>
        <position position="326"/>
    </location>
    <ligand>
        <name>Mg(2+)</name>
        <dbReference type="ChEBI" id="CHEBI:18420"/>
    </ligand>
</feature>
<feature type="binding site" evidence="1">
    <location>
        <position position="328"/>
    </location>
    <ligand>
        <name>Mg(2+)</name>
        <dbReference type="ChEBI" id="CHEBI:18420"/>
    </ligand>
</feature>
<feature type="binding site" evidence="1">
    <location>
        <position position="338"/>
    </location>
    <ligand>
        <name>UDP-N-acetyl-alpha-D-glucosamine</name>
        <dbReference type="ChEBI" id="CHEBI:57705"/>
    </ligand>
</feature>
<feature type="binding site" evidence="1">
    <location>
        <position position="346"/>
    </location>
    <ligand>
        <name>UDP-N-acetyl-alpha-D-glucosamine</name>
        <dbReference type="ChEBI" id="CHEBI:57705"/>
    </ligand>
</feature>
<feature type="binding site" evidence="1">
    <location>
        <position position="352"/>
    </location>
    <ligand>
        <name>Mg(2+)</name>
        <dbReference type="ChEBI" id="CHEBI:18420"/>
    </ligand>
</feature>
<protein>
    <recommendedName>
        <fullName>D-inositol 3-phosphate glycosyltransferase</fullName>
        <ecNumber evidence="1">2.4.1.250</ecNumber>
    </recommendedName>
    <alternativeName>
        <fullName evidence="1">N-acetylglucosamine-inositol-phosphate N-acetylglucosaminyltransferase</fullName>
        <shortName evidence="1">GlcNAc-Ins-P N-acetylglucosaminyltransferase</shortName>
    </alternativeName>
</protein>
<organism>
    <name type="scientific">Stackebrandtia nassauensis (strain DSM 44728 / CIP 108903 / NRRL B-16338 / NBRC 102104 / LLR-40K-21)</name>
    <dbReference type="NCBI Taxonomy" id="446470"/>
    <lineage>
        <taxon>Bacteria</taxon>
        <taxon>Bacillati</taxon>
        <taxon>Actinomycetota</taxon>
        <taxon>Actinomycetes</taxon>
        <taxon>Glycomycetales</taxon>
        <taxon>Glycomycetaceae</taxon>
        <taxon>Stackebrandtia</taxon>
    </lineage>
</organism>
<evidence type="ECO:0000255" key="1">
    <source>
        <dbReference type="HAMAP-Rule" id="MF_01695"/>
    </source>
</evidence>
<gene>
    <name evidence="1" type="primary">mshA</name>
    <name type="ordered locus">Snas_5953</name>
</gene>
<sequence length="443" mass="47134">MRTAPRSQLNRAIAPCRKRGPRRVAMVSMHTSPLEQPGTGDAGGMNVYVLQTARRLADRGVAVEIFTRATSSEQPPALSPSEGITVHYVPAGPFEGLSKGDLPSQLCAFTNGVLRAEAAQPPGYFDVIHSHYWLSGQAAWLAAERWGVPHIHSAHTLAKVKNLHLAAEDTPEPFTRVVGEEQVVAESDALVTNTSSEAEVLVDLYRADPDKVTVTPPGVDPEVFTPGDKLAARRRLGLPDDALVLGFAGRIQPLKAPDVLVRAVARLRALNPELAPRLRLVVVGGPSGNGADNPRWLHDLAAELGIADAVTFLKPRAGHELAEVFRACDVVGVPSYNETFGLVALEAQACGTPVVAAAVGGLTTAVADGHSGLLIRGHDETDWANALDKLVTDAPRRARLAAGALDHAARFTWSHTADDLLGAYGDAIQRRAVSPRRSPASKR</sequence>
<dbReference type="EC" id="2.4.1.250" evidence="1"/>
<dbReference type="EMBL" id="CP001778">
    <property type="protein sequence ID" value="ADD45580.1"/>
    <property type="molecule type" value="Genomic_DNA"/>
</dbReference>
<dbReference type="RefSeq" id="WP_013021151.1">
    <property type="nucleotide sequence ID" value="NC_013947.1"/>
</dbReference>
<dbReference type="SMR" id="D3Q051"/>
<dbReference type="STRING" id="446470.Snas_5953"/>
<dbReference type="CAZy" id="GT4">
    <property type="family name" value="Glycosyltransferase Family 4"/>
</dbReference>
<dbReference type="KEGG" id="sna:Snas_5953"/>
<dbReference type="eggNOG" id="COG0438">
    <property type="taxonomic scope" value="Bacteria"/>
</dbReference>
<dbReference type="HOGENOM" id="CLU_009583_2_3_11"/>
<dbReference type="OrthoDB" id="9810929at2"/>
<dbReference type="Proteomes" id="UP000000844">
    <property type="component" value="Chromosome"/>
</dbReference>
<dbReference type="GO" id="GO:0008375">
    <property type="term" value="F:acetylglucosaminyltransferase activity"/>
    <property type="evidence" value="ECO:0007669"/>
    <property type="project" value="UniProtKB-UniRule"/>
</dbReference>
<dbReference type="GO" id="GO:0102710">
    <property type="term" value="F:D-inositol-3-phosphate glycosyltransferase activity"/>
    <property type="evidence" value="ECO:0007669"/>
    <property type="project" value="UniProtKB-EC"/>
</dbReference>
<dbReference type="GO" id="GO:0000287">
    <property type="term" value="F:magnesium ion binding"/>
    <property type="evidence" value="ECO:0007669"/>
    <property type="project" value="UniProtKB-UniRule"/>
</dbReference>
<dbReference type="GO" id="GO:0010125">
    <property type="term" value="P:mycothiol biosynthetic process"/>
    <property type="evidence" value="ECO:0007669"/>
    <property type="project" value="UniProtKB-UniRule"/>
</dbReference>
<dbReference type="CDD" id="cd03800">
    <property type="entry name" value="GT4_sucrose_synthase"/>
    <property type="match status" value="1"/>
</dbReference>
<dbReference type="Gene3D" id="3.40.50.2000">
    <property type="entry name" value="Glycogen Phosphorylase B"/>
    <property type="match status" value="2"/>
</dbReference>
<dbReference type="HAMAP" id="MF_01695">
    <property type="entry name" value="MshA"/>
    <property type="match status" value="1"/>
</dbReference>
<dbReference type="InterPro" id="IPR001296">
    <property type="entry name" value="Glyco_trans_1"/>
</dbReference>
<dbReference type="InterPro" id="IPR028098">
    <property type="entry name" value="Glyco_trans_4-like_N"/>
</dbReference>
<dbReference type="InterPro" id="IPR050194">
    <property type="entry name" value="Glycosyltransferase_grp1"/>
</dbReference>
<dbReference type="InterPro" id="IPR017814">
    <property type="entry name" value="Mycothiol_biosynthesis_MshA"/>
</dbReference>
<dbReference type="NCBIfam" id="TIGR03449">
    <property type="entry name" value="mycothiol_MshA"/>
    <property type="match status" value="1"/>
</dbReference>
<dbReference type="PANTHER" id="PTHR45947">
    <property type="entry name" value="SULFOQUINOVOSYL TRANSFERASE SQD2"/>
    <property type="match status" value="1"/>
</dbReference>
<dbReference type="PANTHER" id="PTHR45947:SF3">
    <property type="entry name" value="SULFOQUINOVOSYL TRANSFERASE SQD2"/>
    <property type="match status" value="1"/>
</dbReference>
<dbReference type="Pfam" id="PF13579">
    <property type="entry name" value="Glyco_trans_4_4"/>
    <property type="match status" value="1"/>
</dbReference>
<dbReference type="Pfam" id="PF00534">
    <property type="entry name" value="Glycos_transf_1"/>
    <property type="match status" value="1"/>
</dbReference>
<dbReference type="SUPFAM" id="SSF53756">
    <property type="entry name" value="UDP-Glycosyltransferase/glycogen phosphorylase"/>
    <property type="match status" value="1"/>
</dbReference>
<reference key="1">
    <citation type="journal article" date="2009" name="Stand. Genomic Sci.">
        <title>Complete genome sequence of Stackebrandtia nassauensis type strain (LLR-40K-21).</title>
        <authorList>
            <person name="Munk C."/>
            <person name="Lapidus A."/>
            <person name="Copeland A."/>
            <person name="Jando M."/>
            <person name="Mayilraj S."/>
            <person name="Glavina Del Rio T."/>
            <person name="Nolan M."/>
            <person name="Chen F."/>
            <person name="Lucas S."/>
            <person name="Tice H."/>
            <person name="Cheng J.F."/>
            <person name="Han C."/>
            <person name="Detter J.C."/>
            <person name="Bruce D."/>
            <person name="Goodwin L."/>
            <person name="Chain P."/>
            <person name="Pitluck S."/>
            <person name="Goker M."/>
            <person name="Ovchinikova G."/>
            <person name="Pati A."/>
            <person name="Ivanova N."/>
            <person name="Mavromatis K."/>
            <person name="Chen A."/>
            <person name="Palaniappan K."/>
            <person name="Land M."/>
            <person name="Hauser L."/>
            <person name="Chang Y.J."/>
            <person name="Jeffries C.D."/>
            <person name="Bristow J."/>
            <person name="Eisen J.A."/>
            <person name="Markowitz V."/>
            <person name="Hugenholtz P."/>
            <person name="Kyrpides N.C."/>
            <person name="Klenk H.P."/>
        </authorList>
    </citation>
    <scope>NUCLEOTIDE SEQUENCE [LARGE SCALE GENOMIC DNA]</scope>
    <source>
        <strain>DSM 44728 / CIP 108903 / NRRL B-16338 / NBRC 102104 / LLR-40K-21</strain>
    </source>
</reference>
<keyword id="KW-0328">Glycosyltransferase</keyword>
<keyword id="KW-0460">Magnesium</keyword>
<keyword id="KW-0479">Metal-binding</keyword>
<keyword id="KW-1185">Reference proteome</keyword>
<keyword id="KW-0808">Transferase</keyword>
<accession>D3Q051</accession>
<proteinExistence type="inferred from homology"/>
<name>MSHA_STANL</name>